<dbReference type="EMBL" id="DQ205654">
    <property type="protein sequence ID" value="ABA39796.1"/>
    <property type="molecule type" value="mRNA"/>
</dbReference>
<dbReference type="EMBL" id="DQ345367">
    <property type="protein sequence ID" value="ABC74975.1"/>
    <property type="molecule type" value="mRNA"/>
</dbReference>
<dbReference type="TCDB" id="8.B.32.1.11">
    <property type="family name" value="the nicotinic acetylcholine receptor-targeting alpha-conotoxin (a-conotoxin) family"/>
</dbReference>
<dbReference type="ConoServer" id="1153">
    <property type="toxin name" value="lt14a variant precursor"/>
</dbReference>
<dbReference type="ConoServer" id="27">
    <property type="toxin name" value="LtXIVA precursor"/>
</dbReference>
<dbReference type="GO" id="GO:0005576">
    <property type="term" value="C:extracellular region"/>
    <property type="evidence" value="ECO:0007669"/>
    <property type="project" value="UniProtKB-SubCell"/>
</dbReference>
<dbReference type="GO" id="GO:0035792">
    <property type="term" value="C:host cell postsynaptic membrane"/>
    <property type="evidence" value="ECO:0007669"/>
    <property type="project" value="UniProtKB-KW"/>
</dbReference>
<dbReference type="GO" id="GO:0030550">
    <property type="term" value="F:acetylcholine receptor inhibitor activity"/>
    <property type="evidence" value="ECO:0007669"/>
    <property type="project" value="UniProtKB-KW"/>
</dbReference>
<dbReference type="GO" id="GO:0099106">
    <property type="term" value="F:ion channel regulator activity"/>
    <property type="evidence" value="ECO:0007669"/>
    <property type="project" value="UniProtKB-KW"/>
</dbReference>
<dbReference type="GO" id="GO:0090729">
    <property type="term" value="F:toxin activity"/>
    <property type="evidence" value="ECO:0007669"/>
    <property type="project" value="UniProtKB-KW"/>
</dbReference>
<name>CLE1_CONLT</name>
<sequence>MKLSVMFIVFLMLTMPMTCAGISRSATNGGEADVRAHDKAANLMALLQERMCPPLCKPSCTNCG</sequence>
<proteinExistence type="evidence at protein level"/>
<feature type="signal peptide" evidence="2">
    <location>
        <begin position="1"/>
        <end position="20"/>
    </location>
</feature>
<feature type="propeptide" id="PRO_0000262666" evidence="1">
    <location>
        <begin position="21"/>
        <end position="50"/>
    </location>
</feature>
<feature type="peptide" id="PRO_0000262667" description="Alpha-conotoxin Lt14.1" evidence="11">
    <location>
        <begin position="51"/>
        <end position="63"/>
    </location>
</feature>
<feature type="site" description="Binds AChR" evidence="4">
    <location>
        <position position="57"/>
    </location>
</feature>
<feature type="modified residue" description="Cysteine amide" evidence="11 12 13">
    <location>
        <position position="63"/>
    </location>
</feature>
<feature type="disulfide bond" evidence="4">
    <location>
        <begin position="52"/>
        <end position="60"/>
    </location>
</feature>
<feature type="disulfide bond" evidence="4">
    <location>
        <begin position="56"/>
        <end position="63"/>
    </location>
</feature>
<feature type="mutagenesis site" description="Exhibits higher activity as long-lasting analgesic in the hotplate pain model in mice." evidence="4">
    <original>K</original>
    <variation>A</variation>
    <location>
        <position position="57"/>
    </location>
</feature>
<feature type="sequence conflict" description="In Ref. 2; ABC74975." evidence="10" ref="2">
    <original>C</original>
    <variation>R</variation>
    <location>
        <position position="52"/>
    </location>
</feature>
<reference key="1">
    <citation type="journal article" date="2006" name="Peptides">
        <title>Discovery of a novel class of conotoxin from Conus litteratus, lt14a, with a unique cysteine pattern.</title>
        <authorList>
            <person name="Peng C."/>
            <person name="Tang S."/>
            <person name="Pi C."/>
            <person name="Liu J."/>
            <person name="Wang F."/>
            <person name="Wang L."/>
            <person name="Zhou W."/>
            <person name="Xu A."/>
        </authorList>
    </citation>
    <scope>NUCLEOTIDE SEQUENCE [MRNA]</scope>
    <scope>SYNTHESIS OF 51-63</scope>
    <scope>PROBABLE AMIDATION AT CYS-63</scope>
    <scope>FUNCTION</scope>
    <source>
        <tissue>Venom duct</tissue>
    </source>
</reference>
<reference key="2">
    <citation type="journal article" date="2006" name="Genomics">
        <title>Diversity and evolution of conotoxins based on gene expression profiling of Conus litteratus.</title>
        <authorList>
            <person name="Pi C."/>
            <person name="Liu J."/>
            <person name="Peng C."/>
            <person name="Liu Y."/>
            <person name="Jiang X."/>
            <person name="Zhao Y."/>
            <person name="Tang S."/>
            <person name="Wang L."/>
            <person name="Dong M."/>
            <person name="Chen S."/>
            <person name="Xu A."/>
        </authorList>
    </citation>
    <scope>NUCLEOTIDE SEQUENCE [MRNA]</scope>
    <source>
        <tissue>Venom duct</tissue>
    </source>
</reference>
<reference key="3">
    <citation type="journal article" date="2015" name="Toxicon">
        <title>Pharmacological characterization of conotoxin lt14a as a potent non-addictive analgesic.</title>
        <authorList>
            <person name="Ren Z."/>
            <person name="Wang L."/>
            <person name="Qin M."/>
            <person name="You Y."/>
            <person name="Pan W."/>
            <person name="Zhou L."/>
            <person name="Sun D."/>
            <person name="Xu A."/>
        </authorList>
    </citation>
    <scope>FUNCTION</scope>
    <scope>SYNTHESIS OF 51-63</scope>
    <scope>PROBABLE AMIDATION AT CYS-63</scope>
    <scope>PROBABLE DISULFIDE BOND</scope>
</reference>
<reference key="4">
    <citation type="journal article" date="2011" name="Peptides">
        <title>Structure-function relationship of conotoxin lt14a, a potential analgesic with low cytotoxicity.</title>
        <authorList>
            <person name="Sun D."/>
            <person name="Ren Z."/>
            <person name="Zeng X."/>
            <person name="You Y."/>
            <person name="Pan W."/>
            <person name="Zhou M."/>
            <person name="Wang L."/>
            <person name="Xu A."/>
        </authorList>
    </citation>
    <scope>STRUCTURE BY NMR OF 51-63</scope>
    <scope>SYNTHESIS OF 51-63</scope>
    <scope>MUTAGENESIS OF LYS-57</scope>
    <scope>PROBABLE AMIDATION AT CYS-63</scope>
    <scope>FUNCTION</scope>
</reference>
<evidence type="ECO:0000250" key="1"/>
<evidence type="ECO:0000255" key="2"/>
<evidence type="ECO:0000269" key="3">
    <source>
    </source>
</evidence>
<evidence type="ECO:0000269" key="4">
    <source>
    </source>
</evidence>
<evidence type="ECO:0000269" key="5">
    <source>
    </source>
</evidence>
<evidence type="ECO:0000303" key="6">
    <source>
    </source>
</evidence>
<evidence type="ECO:0000303" key="7">
    <source>
    </source>
</evidence>
<evidence type="ECO:0000303" key="8">
    <source>
    </source>
</evidence>
<evidence type="ECO:0000303" key="9">
    <source>
    </source>
</evidence>
<evidence type="ECO:0000305" key="10"/>
<evidence type="ECO:0000305" key="11">
    <source>
    </source>
</evidence>
<evidence type="ECO:0000305" key="12">
    <source>
    </source>
</evidence>
<evidence type="ECO:0000305" key="13">
    <source>
    </source>
</evidence>
<keyword id="KW-0008">Acetylcholine receptor inhibiting toxin</keyword>
<keyword id="KW-0027">Amidation</keyword>
<keyword id="KW-1015">Disulfide bond</keyword>
<keyword id="KW-0379">Hydroxylation</keyword>
<keyword id="KW-0872">Ion channel impairing toxin</keyword>
<keyword id="KW-0528">Neurotoxin</keyword>
<keyword id="KW-0629">Postsynaptic neurotoxin</keyword>
<keyword id="KW-0964">Secreted</keyword>
<keyword id="KW-0732">Signal</keyword>
<keyword id="KW-0800">Toxin</keyword>
<accession>Q2I2R5</accession>
<accession>Q0P0L5</accession>
<comment type="function">
    <text evidence="3 5">Alpha-conotoxins act on postsynaptic membranes, they bind to the nicotinic acetylcholine receptors (nAChR) and thus inhibit them (PubMed:16797781, PubMed:25617597). This synthetic peptide displays analgesic activity in a hot plate assay (PubMed:16797781, PubMed:21126549, PubMed:25617597). Analgesia is also observed against second phase pain in formalin-induced inflammatory pain model, and in a rat model of mechanically-induced pain (PubMed:25617597). Effects downstream of nAChR are inhibition of calcium influx, inhibition of ERK1/2 phosphorylation and inhibition of c-fos/NOS expression (PubMed:25617597). Genes associated with drug dependence are not up-regulated by this toxin (PubMed:25617597). Treatment with this toxin reversed morphine withdrawal symptoms in mice (PubMed:25617597).</text>
</comment>
<comment type="subcellular location">
    <subcellularLocation>
        <location evidence="1">Secreted</location>
    </subcellularLocation>
</comment>
<comment type="tissue specificity">
    <text evidence="10">Expressed by the venom duct.</text>
</comment>
<comment type="domain">
    <text evidence="10">The cysteine framework is XIV (C-C-C-C).</text>
</comment>
<comment type="PTM">
    <text evidence="10">May contain a 4-hydroxyproline.</text>
</comment>
<comment type="similarity">
    <text evidence="10">Belongs to the conotoxin L superfamily.</text>
</comment>
<protein>
    <recommendedName>
        <fullName evidence="7">Alpha-conotoxin Lt14.1</fullName>
    </recommendedName>
    <alternativeName>
        <fullName evidence="6 7 8 9">Alpha-L-conotoxin Lt14a</fullName>
    </alternativeName>
    <alternativeName>
        <fullName evidence="10">Alpha-conotoxin LtXIVA</fullName>
    </alternativeName>
</protein>
<organism>
    <name type="scientific">Conus litteratus</name>
    <name type="common">Lettered cone</name>
    <dbReference type="NCBI Taxonomy" id="89445"/>
    <lineage>
        <taxon>Eukaryota</taxon>
        <taxon>Metazoa</taxon>
        <taxon>Spiralia</taxon>
        <taxon>Lophotrochozoa</taxon>
        <taxon>Mollusca</taxon>
        <taxon>Gastropoda</taxon>
        <taxon>Caenogastropoda</taxon>
        <taxon>Neogastropoda</taxon>
        <taxon>Conoidea</taxon>
        <taxon>Conidae</taxon>
        <taxon>Conus</taxon>
        <taxon>Elisaconus</taxon>
    </lineage>
</organism>